<gene>
    <name evidence="4" type="primary">KS1-1</name>
</gene>
<evidence type="ECO:0000250" key="1">
    <source>
        <dbReference type="UniProtKB" id="Q40577"/>
    </source>
</evidence>
<evidence type="ECO:0000255" key="2"/>
<evidence type="ECO:0000269" key="3">
    <source>
    </source>
</evidence>
<evidence type="ECO:0000303" key="4">
    <source>
    </source>
</evidence>
<evidence type="ECO:0000305" key="5"/>
<protein>
    <recommendedName>
        <fullName evidence="4">Ent-kaurene synthase 1, chloroplastic</fullName>
        <shortName evidence="4">SrKS1</shortName>
        <ecNumber evidence="3">4.2.3.19</ecNumber>
    </recommendedName>
</protein>
<comment type="function">
    <text evidence="3">Involved in the biosynthesis of ent-kaurene diterpenoids natural products such as oridonin, miltiradiene, eriocalyxin B and nezukol, known to exhibit antitumor, anti-inflammatory and antibacterial activities, and in the production of gibberellins phytohormones (PubMed:10504563). Catalyzes the conversion of ent-copalyl diphosphate (ent-CPP) to ent-kaurene (PubMed:10504563).</text>
</comment>
<comment type="catalytic activity">
    <reaction evidence="3">
        <text>ent-copalyl diphosphate = ent-kaur-16-ene + diphosphate</text>
        <dbReference type="Rhea" id="RHEA:22220"/>
        <dbReference type="ChEBI" id="CHEBI:15415"/>
        <dbReference type="ChEBI" id="CHEBI:33019"/>
        <dbReference type="ChEBI" id="CHEBI:58553"/>
        <dbReference type="EC" id="4.2.3.19"/>
    </reaction>
    <physiologicalReaction direction="left-to-right" evidence="3">
        <dbReference type="Rhea" id="RHEA:22221"/>
    </physiologicalReaction>
</comment>
<comment type="cofactor">
    <cofactor evidence="1">
        <name>Mg(2+)</name>
        <dbReference type="ChEBI" id="CHEBI:18420"/>
    </cofactor>
    <text evidence="1">Binds 3 Mg(2+) ions per subunit.</text>
</comment>
<comment type="pathway">
    <text evidence="3">Secondary metabolite biosynthesis; terpenoid biosynthesis.</text>
</comment>
<comment type="pathway">
    <text evidence="5">Plant hormone biosynthesis; gibberellin biosynthesis.</text>
</comment>
<comment type="subcellular location">
    <subcellularLocation>
        <location evidence="2">Plastid</location>
        <location evidence="2">Chloroplast</location>
    </subcellularLocation>
</comment>
<comment type="tissue specificity">
    <text evidence="3">Accumulates in leaves.</text>
</comment>
<comment type="domain">
    <text evidence="5">The Asp-Asp-Xaa-Xaa-Asp/Glu (DDXXD/E) motif is important for the catalytic activity, presumably through binding to Mg(2+).</text>
</comment>
<comment type="similarity">
    <text evidence="5">Belongs to the terpene synthase family.</text>
</comment>
<proteinExistence type="evidence at protein level"/>
<organism>
    <name type="scientific">Stevia rebaudiana</name>
    <name type="common">Stevia</name>
    <name type="synonym">Eupatorium rebaudianum</name>
    <dbReference type="NCBI Taxonomy" id="55670"/>
    <lineage>
        <taxon>Eukaryota</taxon>
        <taxon>Viridiplantae</taxon>
        <taxon>Streptophyta</taxon>
        <taxon>Embryophyta</taxon>
        <taxon>Tracheophyta</taxon>
        <taxon>Spermatophyta</taxon>
        <taxon>Magnoliopsida</taxon>
        <taxon>eudicotyledons</taxon>
        <taxon>Gunneridae</taxon>
        <taxon>Pentapetalae</taxon>
        <taxon>asterids</taxon>
        <taxon>campanulids</taxon>
        <taxon>Asterales</taxon>
        <taxon>Asteraceae</taxon>
        <taxon>Asteroideae</taxon>
        <taxon>Heliantheae alliance</taxon>
        <taxon>Eupatorieae</taxon>
        <taxon>Stevia</taxon>
    </lineage>
</organism>
<name>KS1_STERE</name>
<sequence>MNLSLCIASPLLTKSSRPTALSAIHTASTSHGGQTNPTNLIIDTTKERIQKLFKNVEISVSSYDTAWVAMVPSPNSPKSPCFPECLNWLINNQLNDGSWGLVNHTHNHNHPLLKDSLSSTLACIVALKRWNVGEDQINKGLSFIESNLASATDKSQPSPIGFDIIFPGLLEYAKNLDINLLSKQTDFSLMLHKRELEQKRCHSNEIDGYLAYISEGLGNLYDWNMVKKYQMKNGSVFNSPSATAAAFINHQNPGCLNYLNSLLDKFGNAVPTVYPLDLYIRLSMVDTIERLGISHHFRVEIKNVLDETYRCWVERDEQIFMDVVTCALAFRLLRIHGYKVSPDQLAEITNELAFKDEYAALETYHASQILYQEDLSSGKQILKSADFLKGILSTDSNRLSKLIHKEVENALKFPINTGLERINTRRNIQLYNVDNTRILKTTYHSSNISNTYYLRLAVEDFYTCQSIYREELKGLERWVVQNKLDQLKFARQKTAYCYFSVAATLSSPELSDARISWAKNGILTTVVDDFFDIGGTIDELTNLIQCVEKWNVDVDKDCCSEHVRILFLALKDAICWIGDEAFKWQARDVTSHVIQTWLELMNSMLREAIWTRDAYVPTLNEYMENAYVSFALGPIVKPAIYFVGPKLSEEIVESSEYHNLFKLMSTQGRLLNDIHSFKREFKEGKLNAVALHLSNGESGKVEEEVVEEMMMMIKNKRKELMKLIFEENGSIVPRACKDAFWNMCHVLNFFYANDDGFTGNTILDTVKDIIYNPLVLVNENEEQR</sequence>
<feature type="transit peptide" description="Chloroplast" evidence="2">
    <location>
        <begin position="1"/>
        <end position="28"/>
    </location>
</feature>
<feature type="chain" id="PRO_0000452389" description="Ent-kaurene synthase 1, chloroplastic">
    <location>
        <begin position="29"/>
        <end position="784"/>
    </location>
</feature>
<feature type="short sequence motif" description="DDXXD motif" evidence="5">
    <location>
        <begin position="528"/>
        <end position="532"/>
    </location>
</feature>
<feature type="binding site" evidence="1">
    <location>
        <position position="528"/>
    </location>
    <ligand>
        <name>Mg(2+)</name>
        <dbReference type="ChEBI" id="CHEBI:18420"/>
        <label>1</label>
    </ligand>
</feature>
<feature type="binding site" evidence="1">
    <location>
        <position position="528"/>
    </location>
    <ligand>
        <name>Mg(2+)</name>
        <dbReference type="ChEBI" id="CHEBI:18420"/>
        <label>2</label>
    </ligand>
</feature>
<feature type="binding site" evidence="1">
    <location>
        <position position="532"/>
    </location>
    <ligand>
        <name>Mg(2+)</name>
        <dbReference type="ChEBI" id="CHEBI:18420"/>
        <label>1</label>
    </ligand>
</feature>
<feature type="binding site" evidence="1">
    <location>
        <position position="532"/>
    </location>
    <ligand>
        <name>Mg(2+)</name>
        <dbReference type="ChEBI" id="CHEBI:18420"/>
        <label>2</label>
    </ligand>
</feature>
<feature type="binding site" evidence="1">
    <location>
        <position position="672"/>
    </location>
    <ligand>
        <name>Mg(2+)</name>
        <dbReference type="ChEBI" id="CHEBI:18420"/>
        <label>3</label>
    </ligand>
</feature>
<feature type="binding site" evidence="1">
    <location>
        <position position="680"/>
    </location>
    <ligand>
        <name>Mg(2+)</name>
        <dbReference type="ChEBI" id="CHEBI:18420"/>
        <label>3</label>
    </ligand>
</feature>
<reference key="1">
    <citation type="journal article" date="1999" name="Plant J.">
        <title>Diterpene synthesis in Stevia rebaudiana: recruitment and up-regulation of key enzymes from the gibberellin biosynthetic pathway.</title>
        <authorList>
            <person name="Richman A.S."/>
            <person name="Gijzen M."/>
            <person name="Starratt A.N."/>
            <person name="Yang Z."/>
            <person name="Brandle J.E."/>
        </authorList>
    </citation>
    <scope>NUCLEOTIDE SEQUENCE [MRNA]</scope>
    <scope>FUNCTION</scope>
    <scope>CATALYTIC ACTIVITY</scope>
    <scope>PATHWAY</scope>
    <scope>TISSUE SPECIFICITY</scope>
    <source>
        <tissue>Leaf</tissue>
    </source>
</reference>
<keyword id="KW-0150">Chloroplast</keyword>
<keyword id="KW-0456">Lyase</keyword>
<keyword id="KW-0460">Magnesium</keyword>
<keyword id="KW-0479">Metal-binding</keyword>
<keyword id="KW-0934">Plastid</keyword>
<keyword id="KW-0809">Transit peptide</keyword>
<dbReference type="EC" id="4.2.3.19" evidence="3"/>
<dbReference type="EMBL" id="AF097310">
    <property type="protein sequence ID" value="AAD34294.1"/>
    <property type="molecule type" value="mRNA"/>
</dbReference>
<dbReference type="SMR" id="Q9XEH9"/>
<dbReference type="BRENDA" id="4.2.3.19">
    <property type="organism ID" value="8947"/>
</dbReference>
<dbReference type="UniPathway" id="UPA00213"/>
<dbReference type="UniPathway" id="UPA00390"/>
<dbReference type="GO" id="GO:0009507">
    <property type="term" value="C:chloroplast"/>
    <property type="evidence" value="ECO:0007669"/>
    <property type="project" value="UniProtKB-SubCell"/>
</dbReference>
<dbReference type="GO" id="GO:0009899">
    <property type="term" value="F:ent-kaurene synthase activity"/>
    <property type="evidence" value="ECO:0000314"/>
    <property type="project" value="UniProtKB"/>
</dbReference>
<dbReference type="GO" id="GO:0000287">
    <property type="term" value="F:magnesium ion binding"/>
    <property type="evidence" value="ECO:0007669"/>
    <property type="project" value="InterPro"/>
</dbReference>
<dbReference type="GO" id="GO:0033332">
    <property type="term" value="P:ent-kaurene biosynthetic process"/>
    <property type="evidence" value="ECO:0000314"/>
    <property type="project" value="UniProtKB"/>
</dbReference>
<dbReference type="GO" id="GO:0009686">
    <property type="term" value="P:gibberellin biosynthetic process"/>
    <property type="evidence" value="ECO:0007669"/>
    <property type="project" value="UniProtKB-UniPathway"/>
</dbReference>
<dbReference type="GO" id="GO:0016114">
    <property type="term" value="P:terpenoid biosynthetic process"/>
    <property type="evidence" value="ECO:0000314"/>
    <property type="project" value="UniProtKB"/>
</dbReference>
<dbReference type="CDD" id="cd00684">
    <property type="entry name" value="Terpene_cyclase_plant_C1"/>
    <property type="match status" value="1"/>
</dbReference>
<dbReference type="FunFam" id="1.50.10.160:FF:000002">
    <property type="entry name" value="cis-abienol synthase, chloroplastic"/>
    <property type="match status" value="1"/>
</dbReference>
<dbReference type="FunFam" id="1.50.10.130:FF:000002">
    <property type="entry name" value="Ent-copalyl diphosphate synthase, chloroplastic"/>
    <property type="match status" value="1"/>
</dbReference>
<dbReference type="FunFam" id="1.10.600.10:FF:000005">
    <property type="entry name" value="Ent-kaur-16-ene synthase, chloroplastic"/>
    <property type="match status" value="1"/>
</dbReference>
<dbReference type="Gene3D" id="1.50.10.160">
    <property type="match status" value="1"/>
</dbReference>
<dbReference type="Gene3D" id="1.10.600.10">
    <property type="entry name" value="Farnesyl Diphosphate Synthase"/>
    <property type="match status" value="1"/>
</dbReference>
<dbReference type="Gene3D" id="1.50.10.130">
    <property type="entry name" value="Terpene synthase, N-terminal domain"/>
    <property type="match status" value="1"/>
</dbReference>
<dbReference type="InterPro" id="IPR008949">
    <property type="entry name" value="Isoprenoid_synthase_dom_sf"/>
</dbReference>
<dbReference type="InterPro" id="IPR044814">
    <property type="entry name" value="Terpene_cyclase_plant_C1"/>
</dbReference>
<dbReference type="InterPro" id="IPR001906">
    <property type="entry name" value="Terpene_synth_N"/>
</dbReference>
<dbReference type="InterPro" id="IPR036965">
    <property type="entry name" value="Terpene_synth_N_sf"/>
</dbReference>
<dbReference type="InterPro" id="IPR050148">
    <property type="entry name" value="Terpene_synthase-like"/>
</dbReference>
<dbReference type="InterPro" id="IPR005630">
    <property type="entry name" value="Terpene_synthase_metal-bd"/>
</dbReference>
<dbReference type="InterPro" id="IPR008930">
    <property type="entry name" value="Terpenoid_cyclase/PrenylTrfase"/>
</dbReference>
<dbReference type="PANTHER" id="PTHR31739">
    <property type="entry name" value="ENT-COPALYL DIPHOSPHATE SYNTHASE, CHLOROPLASTIC"/>
    <property type="match status" value="1"/>
</dbReference>
<dbReference type="PANTHER" id="PTHR31739:SF3">
    <property type="entry name" value="ENT-KAUR-16-ENE SYNTHASE, CHLOROPLASTIC"/>
    <property type="match status" value="1"/>
</dbReference>
<dbReference type="Pfam" id="PF01397">
    <property type="entry name" value="Terpene_synth"/>
    <property type="match status" value="1"/>
</dbReference>
<dbReference type="Pfam" id="PF03936">
    <property type="entry name" value="Terpene_synth_C"/>
    <property type="match status" value="1"/>
</dbReference>
<dbReference type="SFLD" id="SFLDG01014">
    <property type="entry name" value="Terpene_Cyclase_Like_1_N-term"/>
    <property type="match status" value="1"/>
</dbReference>
<dbReference type="SUPFAM" id="SSF48239">
    <property type="entry name" value="Terpenoid cyclases/Protein prenyltransferases"/>
    <property type="match status" value="2"/>
</dbReference>
<dbReference type="SUPFAM" id="SSF48576">
    <property type="entry name" value="Terpenoid synthases"/>
    <property type="match status" value="1"/>
</dbReference>
<accession>Q9XEH9</accession>